<keyword id="KW-0963">Cytoplasm</keyword>
<keyword id="KW-0489">Methyltransferase</keyword>
<keyword id="KW-1185">Reference proteome</keyword>
<keyword id="KW-0698">rRNA processing</keyword>
<keyword id="KW-0949">S-adenosyl-L-methionine</keyword>
<keyword id="KW-0808">Transferase</keyword>
<evidence type="ECO:0000255" key="1">
    <source>
        <dbReference type="HAMAP-Rule" id="MF_01862"/>
    </source>
</evidence>
<dbReference type="EC" id="2.1.1.172" evidence="1"/>
<dbReference type="EMBL" id="CP000746">
    <property type="protein sequence ID" value="ABR74301.1"/>
    <property type="molecule type" value="Genomic_DNA"/>
</dbReference>
<dbReference type="RefSeq" id="WP_012072678.1">
    <property type="nucleotide sequence ID" value="NC_009655.1"/>
</dbReference>
<dbReference type="SMR" id="A6VMV4"/>
<dbReference type="STRING" id="339671.Asuc_0933"/>
<dbReference type="KEGG" id="asu:Asuc_0933"/>
<dbReference type="eggNOG" id="COG2813">
    <property type="taxonomic scope" value="Bacteria"/>
</dbReference>
<dbReference type="HOGENOM" id="CLU_049581_0_0_6"/>
<dbReference type="OrthoDB" id="9816072at2"/>
<dbReference type="Proteomes" id="UP000001114">
    <property type="component" value="Chromosome"/>
</dbReference>
<dbReference type="GO" id="GO:0005737">
    <property type="term" value="C:cytoplasm"/>
    <property type="evidence" value="ECO:0007669"/>
    <property type="project" value="UniProtKB-SubCell"/>
</dbReference>
<dbReference type="GO" id="GO:0052914">
    <property type="term" value="F:16S rRNA (guanine(1207)-N(2))-methyltransferase activity"/>
    <property type="evidence" value="ECO:0007669"/>
    <property type="project" value="UniProtKB-EC"/>
</dbReference>
<dbReference type="GO" id="GO:0003676">
    <property type="term" value="F:nucleic acid binding"/>
    <property type="evidence" value="ECO:0007669"/>
    <property type="project" value="InterPro"/>
</dbReference>
<dbReference type="CDD" id="cd02440">
    <property type="entry name" value="AdoMet_MTases"/>
    <property type="match status" value="1"/>
</dbReference>
<dbReference type="Gene3D" id="3.40.50.150">
    <property type="entry name" value="Vaccinia Virus protein VP39"/>
    <property type="match status" value="2"/>
</dbReference>
<dbReference type="HAMAP" id="MF_01862">
    <property type="entry name" value="16SrRNA_methyltr_C"/>
    <property type="match status" value="1"/>
</dbReference>
<dbReference type="InterPro" id="IPR002052">
    <property type="entry name" value="DNA_methylase_N6_adenine_CS"/>
</dbReference>
<dbReference type="InterPro" id="IPR013675">
    <property type="entry name" value="Mtase_sm_N"/>
</dbReference>
<dbReference type="InterPro" id="IPR023543">
    <property type="entry name" value="rRNA_ssu_MeTfrase_C"/>
</dbReference>
<dbReference type="InterPro" id="IPR046977">
    <property type="entry name" value="RsmC/RlmG"/>
</dbReference>
<dbReference type="InterPro" id="IPR029063">
    <property type="entry name" value="SAM-dependent_MTases_sf"/>
</dbReference>
<dbReference type="InterPro" id="IPR007848">
    <property type="entry name" value="Small_mtfrase_dom"/>
</dbReference>
<dbReference type="NCBIfam" id="NF007023">
    <property type="entry name" value="PRK09489.1"/>
    <property type="match status" value="1"/>
</dbReference>
<dbReference type="PANTHER" id="PTHR47816">
    <property type="entry name" value="RIBOSOMAL RNA SMALL SUBUNIT METHYLTRANSFERASE C"/>
    <property type="match status" value="1"/>
</dbReference>
<dbReference type="PANTHER" id="PTHR47816:SF4">
    <property type="entry name" value="RIBOSOMAL RNA SMALL SUBUNIT METHYLTRANSFERASE C"/>
    <property type="match status" value="1"/>
</dbReference>
<dbReference type="Pfam" id="PF05175">
    <property type="entry name" value="MTS"/>
    <property type="match status" value="1"/>
</dbReference>
<dbReference type="Pfam" id="PF08468">
    <property type="entry name" value="MTS_N"/>
    <property type="match status" value="1"/>
</dbReference>
<dbReference type="SUPFAM" id="SSF53335">
    <property type="entry name" value="S-adenosyl-L-methionine-dependent methyltransferases"/>
    <property type="match status" value="1"/>
</dbReference>
<comment type="function">
    <text evidence="1">Specifically methylates the guanine in position 1207 of 16S rRNA in the 30S particle.</text>
</comment>
<comment type="catalytic activity">
    <reaction evidence="1">
        <text>guanosine(1207) in 16S rRNA + S-adenosyl-L-methionine = N(2)-methylguanosine(1207) in 16S rRNA + S-adenosyl-L-homocysteine + H(+)</text>
        <dbReference type="Rhea" id="RHEA:42736"/>
        <dbReference type="Rhea" id="RHEA-COMP:10213"/>
        <dbReference type="Rhea" id="RHEA-COMP:10214"/>
        <dbReference type="ChEBI" id="CHEBI:15378"/>
        <dbReference type="ChEBI" id="CHEBI:57856"/>
        <dbReference type="ChEBI" id="CHEBI:59789"/>
        <dbReference type="ChEBI" id="CHEBI:74269"/>
        <dbReference type="ChEBI" id="CHEBI:74481"/>
        <dbReference type="EC" id="2.1.1.172"/>
    </reaction>
</comment>
<comment type="subunit">
    <text evidence="1">Monomer.</text>
</comment>
<comment type="subcellular location">
    <subcellularLocation>
        <location evidence="1">Cytoplasm</location>
    </subcellularLocation>
</comment>
<comment type="similarity">
    <text evidence="1">Belongs to the methyltransferase superfamily. RsmC family.</text>
</comment>
<protein>
    <recommendedName>
        <fullName evidence="1">Ribosomal RNA small subunit methyltransferase C</fullName>
        <ecNumber evidence="1">2.1.1.172</ecNumber>
    </recommendedName>
    <alternativeName>
        <fullName evidence="1">16S rRNA m2G1207 methyltransferase</fullName>
    </alternativeName>
    <alternativeName>
        <fullName evidence="1">rRNA (guanine-N(2)-)-methyltransferase RsmC</fullName>
    </alternativeName>
</protein>
<accession>A6VMV4</accession>
<sequence length="333" mass="37263">MISLESQVLERHLSIFADKTLLFAGGVNDDFPVQIQKIAKTVTVWSWYFDYANAQGRKSAVDFSPVCDTQVDVIVYYWTKNKAEVQFQLMQLLANGRDNQEILIVGENRCGVRSAEKMLSAFGDIGKIDSARRCGLYHFRLKKRPHFDINAYWKTYRNPKLDALTVYSLPGVFSADELDGGTELLLSTINTHIRGDVLDLGCGAGVLGAYVKQQNPQARVMLTDIHAMALASAERTLAENRLAGKVLASDVFSHIQGKFDLIISNPPFHDGIGTAYRAVSELIKEARWRLKEDGELRIVANAFLPYPDLLDEHFGSHQVLAKTNKFKVYSVCA</sequence>
<reference key="1">
    <citation type="journal article" date="2010" name="BMC Genomics">
        <title>A genomic perspective on the potential of Actinobacillus succinogenes for industrial succinate production.</title>
        <authorList>
            <person name="McKinlay J.B."/>
            <person name="Laivenieks M."/>
            <person name="Schindler B.D."/>
            <person name="McKinlay A.A."/>
            <person name="Siddaramappa S."/>
            <person name="Challacombe J.F."/>
            <person name="Lowry S.R."/>
            <person name="Clum A."/>
            <person name="Lapidus A.L."/>
            <person name="Burkhart K.B."/>
            <person name="Harkins V."/>
            <person name="Vieille C."/>
        </authorList>
    </citation>
    <scope>NUCLEOTIDE SEQUENCE [LARGE SCALE GENOMIC DNA]</scope>
    <source>
        <strain>ATCC 55618 / DSM 22257 / CCUG 43843 / 130Z</strain>
    </source>
</reference>
<gene>
    <name evidence="1" type="primary">rsmC</name>
    <name type="ordered locus">Asuc_0933</name>
</gene>
<feature type="chain" id="PRO_0000369684" description="Ribosomal RNA small subunit methyltransferase C">
    <location>
        <begin position="1"/>
        <end position="333"/>
    </location>
</feature>
<name>RSMC_ACTSZ</name>
<proteinExistence type="inferred from homology"/>
<organism>
    <name type="scientific">Actinobacillus succinogenes (strain ATCC 55618 / DSM 22257 / CCUG 43843 / 130Z)</name>
    <dbReference type="NCBI Taxonomy" id="339671"/>
    <lineage>
        <taxon>Bacteria</taxon>
        <taxon>Pseudomonadati</taxon>
        <taxon>Pseudomonadota</taxon>
        <taxon>Gammaproteobacteria</taxon>
        <taxon>Pasteurellales</taxon>
        <taxon>Pasteurellaceae</taxon>
        <taxon>Actinobacillus</taxon>
    </lineage>
</organism>